<evidence type="ECO:0000255" key="1">
    <source>
        <dbReference type="HAMAP-Rule" id="MF_00249"/>
    </source>
</evidence>
<protein>
    <recommendedName>
        <fullName evidence="1">ATP-dependent protease ATPase subunit HslU</fullName>
    </recommendedName>
    <alternativeName>
        <fullName evidence="1">Heat shock protein HslU</fullName>
    </alternativeName>
    <alternativeName>
        <fullName evidence="1">Unfoldase HslU</fullName>
    </alternativeName>
</protein>
<reference key="1">
    <citation type="journal article" date="2006" name="Proc. Natl. Acad. Sci. U.S.A.">
        <title>Identification of genes subject to positive selection in uropathogenic strains of Escherichia coli: a comparative genomics approach.</title>
        <authorList>
            <person name="Chen S.L."/>
            <person name="Hung C.-S."/>
            <person name="Xu J."/>
            <person name="Reigstad C.S."/>
            <person name="Magrini V."/>
            <person name="Sabo A."/>
            <person name="Blasiar D."/>
            <person name="Bieri T."/>
            <person name="Meyer R.R."/>
            <person name="Ozersky P."/>
            <person name="Armstrong J.R."/>
            <person name="Fulton R.S."/>
            <person name="Latreille J.P."/>
            <person name="Spieth J."/>
            <person name="Hooton T.M."/>
            <person name="Mardis E.R."/>
            <person name="Hultgren S.J."/>
            <person name="Gordon J.I."/>
        </authorList>
    </citation>
    <scope>NUCLEOTIDE SEQUENCE [LARGE SCALE GENOMIC DNA]</scope>
    <source>
        <strain>UTI89 / UPEC</strain>
    </source>
</reference>
<organism>
    <name type="scientific">Escherichia coli (strain UTI89 / UPEC)</name>
    <dbReference type="NCBI Taxonomy" id="364106"/>
    <lineage>
        <taxon>Bacteria</taxon>
        <taxon>Pseudomonadati</taxon>
        <taxon>Pseudomonadota</taxon>
        <taxon>Gammaproteobacteria</taxon>
        <taxon>Enterobacterales</taxon>
        <taxon>Enterobacteriaceae</taxon>
        <taxon>Escherichia</taxon>
    </lineage>
</organism>
<name>HSLU_ECOUT</name>
<sequence length="443" mass="49581">MSEMTPREIVSELDKHIIGQDNAKRSVAIALRNRWRRMQLNEELRHEVTPKNILMIGPTGVGKTEIARRLAKLANAPFIKVEATKFTEVGYVGKEVDSIIRDLTDAAVKMVRVQAIEKNRYRAEELAEERILDVLIPPAKNNWGQTEQQQEPSAARQAFRKKLREGQLDDKEIEIDLAAAPMGVEIMAPPGMEEMTSQLQSMFQNLGGQKQKARKLKIKDAMKLLIEEEAAKLVNPEELKQDAIDAVEQHGIVFIDEIDKICKRGESSGPDVSREGVQRDLLPLVEGCTVSTKHGMVKTDHILFIASGAFQIAKPSDLIPELQGRLPIRVELQALTTSDFERILTEPNASITVQYKALMATEGVNIEFTDSGIKRIAEAAWQVNESTENIGARRLHTVLERLMEEISYDASDLSGQTITIDADYVSKHLDALVADEDLSRFIL</sequence>
<gene>
    <name evidence="1" type="primary">hslU</name>
    <name type="ordered locus">UTI89_C4516</name>
</gene>
<dbReference type="EMBL" id="CP000243">
    <property type="protein sequence ID" value="ABE09928.1"/>
    <property type="molecule type" value="Genomic_DNA"/>
</dbReference>
<dbReference type="RefSeq" id="WP_001293344.1">
    <property type="nucleotide sequence ID" value="NZ_CP064825.1"/>
</dbReference>
<dbReference type="SMR" id="Q1R3Y6"/>
<dbReference type="KEGG" id="eci:UTI89_C4516"/>
<dbReference type="HOGENOM" id="CLU_033123_0_0_6"/>
<dbReference type="Proteomes" id="UP000001952">
    <property type="component" value="Chromosome"/>
</dbReference>
<dbReference type="GO" id="GO:0009376">
    <property type="term" value="C:HslUV protease complex"/>
    <property type="evidence" value="ECO:0007669"/>
    <property type="project" value="UniProtKB-UniRule"/>
</dbReference>
<dbReference type="GO" id="GO:0005524">
    <property type="term" value="F:ATP binding"/>
    <property type="evidence" value="ECO:0007669"/>
    <property type="project" value="UniProtKB-UniRule"/>
</dbReference>
<dbReference type="GO" id="GO:0016887">
    <property type="term" value="F:ATP hydrolysis activity"/>
    <property type="evidence" value="ECO:0007669"/>
    <property type="project" value="InterPro"/>
</dbReference>
<dbReference type="GO" id="GO:0008233">
    <property type="term" value="F:peptidase activity"/>
    <property type="evidence" value="ECO:0007669"/>
    <property type="project" value="InterPro"/>
</dbReference>
<dbReference type="GO" id="GO:0036402">
    <property type="term" value="F:proteasome-activating activity"/>
    <property type="evidence" value="ECO:0007669"/>
    <property type="project" value="UniProtKB-UniRule"/>
</dbReference>
<dbReference type="GO" id="GO:0043335">
    <property type="term" value="P:protein unfolding"/>
    <property type="evidence" value="ECO:0007669"/>
    <property type="project" value="UniProtKB-UniRule"/>
</dbReference>
<dbReference type="GO" id="GO:0051603">
    <property type="term" value="P:proteolysis involved in protein catabolic process"/>
    <property type="evidence" value="ECO:0007669"/>
    <property type="project" value="TreeGrafter"/>
</dbReference>
<dbReference type="CDD" id="cd19498">
    <property type="entry name" value="RecA-like_HslU"/>
    <property type="match status" value="1"/>
</dbReference>
<dbReference type="FunFam" id="1.10.8.10:FF:000012">
    <property type="entry name" value="ATP-dependent protease ATPase subunit HslU"/>
    <property type="match status" value="1"/>
</dbReference>
<dbReference type="FunFam" id="1.10.8.10:FF:000028">
    <property type="entry name" value="ATP-dependent protease ATPase subunit HslU"/>
    <property type="match status" value="1"/>
</dbReference>
<dbReference type="FunFam" id="1.10.8.60:FF:000027">
    <property type="entry name" value="ATP-dependent protease ATPase subunit HslU"/>
    <property type="match status" value="1"/>
</dbReference>
<dbReference type="FunFam" id="3.40.50.300:FF:000213">
    <property type="entry name" value="ATP-dependent protease ATPase subunit HslU"/>
    <property type="match status" value="1"/>
</dbReference>
<dbReference type="FunFam" id="3.40.50.300:FF:000220">
    <property type="entry name" value="ATP-dependent protease ATPase subunit HslU"/>
    <property type="match status" value="1"/>
</dbReference>
<dbReference type="Gene3D" id="1.10.8.60">
    <property type="match status" value="1"/>
</dbReference>
<dbReference type="Gene3D" id="1.10.8.10">
    <property type="entry name" value="DNA helicase RuvA subunit, C-terminal domain"/>
    <property type="match status" value="2"/>
</dbReference>
<dbReference type="Gene3D" id="3.40.50.300">
    <property type="entry name" value="P-loop containing nucleotide triphosphate hydrolases"/>
    <property type="match status" value="1"/>
</dbReference>
<dbReference type="HAMAP" id="MF_00249">
    <property type="entry name" value="HslU"/>
    <property type="match status" value="1"/>
</dbReference>
<dbReference type="InterPro" id="IPR003593">
    <property type="entry name" value="AAA+_ATPase"/>
</dbReference>
<dbReference type="InterPro" id="IPR050052">
    <property type="entry name" value="ATP-dep_Clp_protease_ClpX"/>
</dbReference>
<dbReference type="InterPro" id="IPR003959">
    <property type="entry name" value="ATPase_AAA_core"/>
</dbReference>
<dbReference type="InterPro" id="IPR019489">
    <property type="entry name" value="Clp_ATPase_C"/>
</dbReference>
<dbReference type="InterPro" id="IPR004491">
    <property type="entry name" value="HslU"/>
</dbReference>
<dbReference type="InterPro" id="IPR027417">
    <property type="entry name" value="P-loop_NTPase"/>
</dbReference>
<dbReference type="NCBIfam" id="TIGR00390">
    <property type="entry name" value="hslU"/>
    <property type="match status" value="1"/>
</dbReference>
<dbReference type="NCBIfam" id="NF003544">
    <property type="entry name" value="PRK05201.1"/>
    <property type="match status" value="1"/>
</dbReference>
<dbReference type="PANTHER" id="PTHR48102">
    <property type="entry name" value="ATP-DEPENDENT CLP PROTEASE ATP-BINDING SUBUNIT CLPX-LIKE, MITOCHONDRIAL-RELATED"/>
    <property type="match status" value="1"/>
</dbReference>
<dbReference type="PANTHER" id="PTHR48102:SF3">
    <property type="entry name" value="ATP-DEPENDENT PROTEASE ATPASE SUBUNIT HSLU"/>
    <property type="match status" value="1"/>
</dbReference>
<dbReference type="Pfam" id="PF00004">
    <property type="entry name" value="AAA"/>
    <property type="match status" value="1"/>
</dbReference>
<dbReference type="Pfam" id="PF07724">
    <property type="entry name" value="AAA_2"/>
    <property type="match status" value="1"/>
</dbReference>
<dbReference type="SMART" id="SM00382">
    <property type="entry name" value="AAA"/>
    <property type="match status" value="1"/>
</dbReference>
<dbReference type="SMART" id="SM01086">
    <property type="entry name" value="ClpB_D2-small"/>
    <property type="match status" value="1"/>
</dbReference>
<dbReference type="SUPFAM" id="SSF52540">
    <property type="entry name" value="P-loop containing nucleoside triphosphate hydrolases"/>
    <property type="match status" value="1"/>
</dbReference>
<accession>Q1R3Y6</accession>
<comment type="function">
    <text evidence="1">ATPase subunit of a proteasome-like degradation complex; this subunit has chaperone activity. The binding of ATP and its subsequent hydrolysis by HslU are essential for unfolding of protein substrates subsequently hydrolyzed by HslV. HslU recognizes the N-terminal part of its protein substrates and unfolds these before they are guided to HslV for hydrolysis.</text>
</comment>
<comment type="subunit">
    <text evidence="1">A double ring-shaped homohexamer of HslV is capped on each side by a ring-shaped HslU homohexamer. The assembly of the HslU/HslV complex is dependent on binding of ATP.</text>
</comment>
<comment type="subcellular location">
    <subcellularLocation>
        <location evidence="1">Cytoplasm</location>
    </subcellularLocation>
</comment>
<comment type="induction">
    <text evidence="1">By heat shock.</text>
</comment>
<comment type="similarity">
    <text evidence="1">Belongs to the ClpX chaperone family. HslU subfamily.</text>
</comment>
<proteinExistence type="inferred from homology"/>
<keyword id="KW-0067">ATP-binding</keyword>
<keyword id="KW-0143">Chaperone</keyword>
<keyword id="KW-0963">Cytoplasm</keyword>
<keyword id="KW-0547">Nucleotide-binding</keyword>
<keyword id="KW-0346">Stress response</keyword>
<feature type="chain" id="PRO_1000012736" description="ATP-dependent protease ATPase subunit HslU">
    <location>
        <begin position="1"/>
        <end position="443"/>
    </location>
</feature>
<feature type="binding site" evidence="1">
    <location>
        <position position="18"/>
    </location>
    <ligand>
        <name>ATP</name>
        <dbReference type="ChEBI" id="CHEBI:30616"/>
    </ligand>
</feature>
<feature type="binding site" evidence="1">
    <location>
        <begin position="60"/>
        <end position="65"/>
    </location>
    <ligand>
        <name>ATP</name>
        <dbReference type="ChEBI" id="CHEBI:30616"/>
    </ligand>
</feature>
<feature type="binding site" evidence="1">
    <location>
        <position position="256"/>
    </location>
    <ligand>
        <name>ATP</name>
        <dbReference type="ChEBI" id="CHEBI:30616"/>
    </ligand>
</feature>
<feature type="binding site" evidence="1">
    <location>
        <position position="321"/>
    </location>
    <ligand>
        <name>ATP</name>
        <dbReference type="ChEBI" id="CHEBI:30616"/>
    </ligand>
</feature>
<feature type="binding site" evidence="1">
    <location>
        <position position="393"/>
    </location>
    <ligand>
        <name>ATP</name>
        <dbReference type="ChEBI" id="CHEBI:30616"/>
    </ligand>
</feature>